<proteinExistence type="evidence at protein level"/>
<protein>
    <recommendedName>
        <fullName evidence="1">Sec-independent protein translocase protein TatA</fullName>
    </recommendedName>
</protein>
<organism>
    <name type="scientific">Escherichia coli (strain K12)</name>
    <dbReference type="NCBI Taxonomy" id="83333"/>
    <lineage>
        <taxon>Bacteria</taxon>
        <taxon>Pseudomonadati</taxon>
        <taxon>Pseudomonadota</taxon>
        <taxon>Gammaproteobacteria</taxon>
        <taxon>Enterobacterales</taxon>
        <taxon>Enterobacteriaceae</taxon>
        <taxon>Escherichia</taxon>
    </lineage>
</organism>
<dbReference type="EMBL" id="AJ005830">
    <property type="protein sequence ID" value="CAA06724.1"/>
    <property type="molecule type" value="Genomic_DNA"/>
</dbReference>
<dbReference type="EMBL" id="AF067848">
    <property type="protein sequence ID" value="AAC19240.1"/>
    <property type="status" value="ALT_INIT"/>
    <property type="molecule type" value="Genomic_DNA"/>
</dbReference>
<dbReference type="EMBL" id="M87049">
    <property type="protein sequence ID" value="AAA67633.1"/>
    <property type="status" value="ALT_FRAME"/>
    <property type="molecule type" value="Genomic_DNA"/>
</dbReference>
<dbReference type="EMBL" id="U00096">
    <property type="protein sequence ID" value="AAC76839.2"/>
    <property type="molecule type" value="Genomic_DNA"/>
</dbReference>
<dbReference type="EMBL" id="AP009048">
    <property type="protein sequence ID" value="BAE77465.1"/>
    <property type="molecule type" value="Genomic_DNA"/>
</dbReference>
<dbReference type="PIR" id="E65188">
    <property type="entry name" value="E65188"/>
</dbReference>
<dbReference type="PIR" id="S30727">
    <property type="entry name" value="S30727"/>
</dbReference>
<dbReference type="RefSeq" id="NP_418280.4">
    <property type="nucleotide sequence ID" value="NC_000913.3"/>
</dbReference>
<dbReference type="RefSeq" id="WP_001295260.1">
    <property type="nucleotide sequence ID" value="NZ_STEB01000021.1"/>
</dbReference>
<dbReference type="PDB" id="2LZR">
    <property type="method" value="NMR"/>
    <property type="chains" value="A=1-49"/>
</dbReference>
<dbReference type="PDB" id="2LZS">
    <property type="method" value="NMR"/>
    <property type="chains" value="A/B/C/D/E/F/G/H/I=1-49"/>
</dbReference>
<dbReference type="PDB" id="2MN6">
    <property type="method" value="NMR"/>
    <property type="chains" value="A/B=1-89"/>
</dbReference>
<dbReference type="PDB" id="2MN7">
    <property type="method" value="NMR"/>
    <property type="chains" value="A=1-89"/>
</dbReference>
<dbReference type="PDBsum" id="2LZR"/>
<dbReference type="PDBsum" id="2LZS"/>
<dbReference type="PDBsum" id="2MN6"/>
<dbReference type="PDBsum" id="2MN7"/>
<dbReference type="BMRB" id="P69428"/>
<dbReference type="SMR" id="P69428"/>
<dbReference type="BioGRID" id="4263055">
    <property type="interactions" value="407"/>
</dbReference>
<dbReference type="ComplexPortal" id="CPX-3445">
    <property type="entry name" value="Twin-arginine translocation complex"/>
</dbReference>
<dbReference type="DIP" id="DIP-10958N"/>
<dbReference type="FunCoup" id="P69428">
    <property type="interactions" value="525"/>
</dbReference>
<dbReference type="IntAct" id="P69428">
    <property type="interactions" value="3"/>
</dbReference>
<dbReference type="MINT" id="P69428"/>
<dbReference type="STRING" id="511145.b3836"/>
<dbReference type="TCDB" id="2.A.64.1.1">
    <property type="family name" value="the twin arginine targeting (tat) family"/>
</dbReference>
<dbReference type="jPOST" id="P69428"/>
<dbReference type="PaxDb" id="511145-b3836"/>
<dbReference type="EnsemblBacteria" id="AAC76839">
    <property type="protein sequence ID" value="AAC76839"/>
    <property type="gene ID" value="b3836"/>
</dbReference>
<dbReference type="GeneID" id="93778099"/>
<dbReference type="GeneID" id="948321"/>
<dbReference type="KEGG" id="ecj:JW3813"/>
<dbReference type="KEGG" id="eco:b3836"/>
<dbReference type="KEGG" id="ecoc:C3026_20755"/>
<dbReference type="PATRIC" id="fig|511145.12.peg.3952"/>
<dbReference type="eggNOG" id="COG1826">
    <property type="taxonomic scope" value="Bacteria"/>
</dbReference>
<dbReference type="HOGENOM" id="CLU_086034_5_1_6"/>
<dbReference type="InParanoid" id="P69428"/>
<dbReference type="OMA" id="KAMGDDQ"/>
<dbReference type="OrthoDB" id="7066617at2"/>
<dbReference type="PhylomeDB" id="P69428"/>
<dbReference type="BioCyc" id="EcoCyc:TATA"/>
<dbReference type="BioCyc" id="MetaCyc:TATA"/>
<dbReference type="EvolutionaryTrace" id="P69428"/>
<dbReference type="PHI-base" id="PHI:10981"/>
<dbReference type="PRO" id="PR:P69428"/>
<dbReference type="Proteomes" id="UP000000625">
    <property type="component" value="Chromosome"/>
</dbReference>
<dbReference type="GO" id="GO:0005829">
    <property type="term" value="C:cytosol"/>
    <property type="evidence" value="ECO:0000314"/>
    <property type="project" value="EcoCyc"/>
</dbReference>
<dbReference type="GO" id="GO:0005886">
    <property type="term" value="C:plasma membrane"/>
    <property type="evidence" value="ECO:0000314"/>
    <property type="project" value="EcoCyc"/>
</dbReference>
<dbReference type="GO" id="GO:0033281">
    <property type="term" value="C:TAT protein transport complex"/>
    <property type="evidence" value="ECO:0000314"/>
    <property type="project" value="EcoCyc"/>
</dbReference>
<dbReference type="GO" id="GO:0042802">
    <property type="term" value="F:identical protein binding"/>
    <property type="evidence" value="ECO:0000314"/>
    <property type="project" value="EcoCyc"/>
</dbReference>
<dbReference type="GO" id="GO:0008289">
    <property type="term" value="F:lipid binding"/>
    <property type="evidence" value="ECO:0000269"/>
    <property type="project" value="DisProt"/>
</dbReference>
<dbReference type="GO" id="GO:0008320">
    <property type="term" value="F:protein transmembrane transporter activity"/>
    <property type="evidence" value="ECO:0000316"/>
    <property type="project" value="EcoliWiki"/>
</dbReference>
<dbReference type="GO" id="GO:0009977">
    <property type="term" value="F:proton motive force dependent protein transmembrane transporter activity"/>
    <property type="evidence" value="ECO:0000314"/>
    <property type="project" value="EcoCyc"/>
</dbReference>
<dbReference type="GO" id="GO:0065002">
    <property type="term" value="P:intracellular protein transmembrane transport"/>
    <property type="evidence" value="ECO:0000314"/>
    <property type="project" value="EcoCyc"/>
</dbReference>
<dbReference type="GO" id="GO:0043953">
    <property type="term" value="P:protein transport by the Tat complex"/>
    <property type="evidence" value="ECO:0000314"/>
    <property type="project" value="EcoCyc"/>
</dbReference>
<dbReference type="DisProt" id="DP00834"/>
<dbReference type="FunFam" id="1.20.5.3310:FF:000001">
    <property type="entry name" value="Probable Sec-independent protein translocase protein TatE"/>
    <property type="match status" value="1"/>
</dbReference>
<dbReference type="Gene3D" id="1.20.5.3310">
    <property type="match status" value="1"/>
</dbReference>
<dbReference type="HAMAP" id="MF_00236">
    <property type="entry name" value="TatA_E"/>
    <property type="match status" value="1"/>
</dbReference>
<dbReference type="InterPro" id="IPR003369">
    <property type="entry name" value="TatA/B/E"/>
</dbReference>
<dbReference type="InterPro" id="IPR006312">
    <property type="entry name" value="TatA/E"/>
</dbReference>
<dbReference type="NCBIfam" id="NF002922">
    <property type="entry name" value="PRK03554.1"/>
    <property type="match status" value="1"/>
</dbReference>
<dbReference type="NCBIfam" id="TIGR01411">
    <property type="entry name" value="tatAE"/>
    <property type="match status" value="1"/>
</dbReference>
<dbReference type="PANTHER" id="PTHR42982">
    <property type="entry name" value="SEC-INDEPENDENT PROTEIN TRANSLOCASE PROTEIN TATA"/>
    <property type="match status" value="1"/>
</dbReference>
<dbReference type="PANTHER" id="PTHR42982:SF1">
    <property type="entry name" value="SEC-INDEPENDENT PROTEIN TRANSLOCASE PROTEIN TATA"/>
    <property type="match status" value="1"/>
</dbReference>
<dbReference type="Pfam" id="PF02416">
    <property type="entry name" value="TatA_B_E"/>
    <property type="match status" value="1"/>
</dbReference>
<reference key="1">
    <citation type="journal article" date="1998" name="EMBO J.">
        <title>Overlapping functions of components of a bacterial Sec-independent protein export pathway.</title>
        <authorList>
            <person name="Sargent F."/>
            <person name="Bogsch E.G."/>
            <person name="Stanley N.R."/>
            <person name="Wexler M."/>
            <person name="Robinson C."/>
            <person name="Berks B.C."/>
            <person name="Palmer T."/>
        </authorList>
    </citation>
    <scope>NUCLEOTIDE SEQUENCE [GENOMIC DNA]</scope>
    <scope>FUNCTION</scope>
    <scope>DISRUPTION PHENOTYPE</scope>
    <source>
        <strain>K12 / MC4100 / ATCC 35695 / DSM 6574</strain>
    </source>
</reference>
<reference key="2">
    <citation type="journal article" date="1998" name="Cell">
        <title>A novel and ubiquitous system for membrane targeting and secretion of cofactor-containing proteins.</title>
        <authorList>
            <person name="Weiner J.H."/>
            <person name="Bilous P.T."/>
            <person name="Shaw G.M."/>
            <person name="Lubitz S.P."/>
            <person name="Frost L."/>
            <person name="Thomas G.H."/>
            <person name="Cole J.A."/>
            <person name="Turner R.J."/>
        </authorList>
    </citation>
    <scope>NUCLEOTIDE SEQUENCE [GENOMIC DNA]</scope>
    <source>
        <strain>ATCC 33694 / HB101</strain>
    </source>
</reference>
<reference key="3">
    <citation type="journal article" date="1992" name="Science">
        <title>Analysis of the Escherichia coli genome: DNA sequence of the region from 84.5 to 86.5 minutes.</title>
        <authorList>
            <person name="Daniels D.L."/>
            <person name="Plunkett G. III"/>
            <person name="Burland V.D."/>
            <person name="Blattner F.R."/>
        </authorList>
    </citation>
    <scope>NUCLEOTIDE SEQUENCE [LARGE SCALE GENOMIC DNA]</scope>
    <source>
        <strain>K12 / MG1655 / ATCC 47076</strain>
    </source>
</reference>
<reference key="4">
    <citation type="journal article" date="1997" name="Science">
        <title>The complete genome sequence of Escherichia coli K-12.</title>
        <authorList>
            <person name="Blattner F.R."/>
            <person name="Plunkett G. III"/>
            <person name="Bloch C.A."/>
            <person name="Perna N.T."/>
            <person name="Burland V."/>
            <person name="Riley M."/>
            <person name="Collado-Vides J."/>
            <person name="Glasner J.D."/>
            <person name="Rode C.K."/>
            <person name="Mayhew G.F."/>
            <person name="Gregor J."/>
            <person name="Davis N.W."/>
            <person name="Kirkpatrick H.A."/>
            <person name="Goeden M.A."/>
            <person name="Rose D.J."/>
            <person name="Mau B."/>
            <person name="Shao Y."/>
        </authorList>
    </citation>
    <scope>NUCLEOTIDE SEQUENCE [LARGE SCALE GENOMIC DNA]</scope>
    <scope>SEQUENCE REVISION</scope>
    <source>
        <strain>K12 / MG1655 / ATCC 47076</strain>
    </source>
</reference>
<reference key="5">
    <citation type="journal article" date="2006" name="Mol. Syst. Biol.">
        <title>Highly accurate genome sequences of Escherichia coli K-12 strains MG1655 and W3110.</title>
        <authorList>
            <person name="Hayashi K."/>
            <person name="Morooka N."/>
            <person name="Yamamoto Y."/>
            <person name="Fujita K."/>
            <person name="Isono K."/>
            <person name="Choi S."/>
            <person name="Ohtsubo E."/>
            <person name="Baba T."/>
            <person name="Wanner B.L."/>
            <person name="Mori H."/>
            <person name="Horiuchi T."/>
        </authorList>
    </citation>
    <scope>NUCLEOTIDE SEQUENCE [LARGE SCALE GENOMIC DNA]</scope>
    <source>
        <strain>K12 / W3110 / ATCC 27325 / DSM 5911</strain>
    </source>
</reference>
<reference key="6">
    <citation type="journal article" date="2001" name="J. Biol. Chem.">
        <title>TatB and TatC form a functional and structural unit of the twin-arginine translocase from Escherichia coli.</title>
        <authorList>
            <person name="Bolhuis A."/>
            <person name="Mathers J.E."/>
            <person name="Thomas J.D."/>
            <person name="Barrett C.M."/>
            <person name="Robinson C."/>
        </authorList>
    </citation>
    <scope>PROTEIN SEQUENCE OF 1-6</scope>
    <scope>INTERACTION WITH TATB AND TATC</scope>
    <source>
        <strain>K12 / MC4100 / ATCC 35695 / DSM 6574</strain>
    </source>
</reference>
<reference key="7">
    <citation type="journal article" date="2000" name="Mol. Microbiol.">
        <title>The Tat protein export pathway.</title>
        <authorList>
            <person name="Berks B.C."/>
            <person name="Sargent F."/>
            <person name="Palmer T."/>
        </authorList>
    </citation>
    <scope>REVIEW</scope>
</reference>
<reference key="8">
    <citation type="journal article" date="2001" name="Eur. J. Biochem.">
        <title>Purified components of the Escherichia coli Tat protein transport system form a double-layered ring structure.</title>
        <authorList>
            <person name="Sargent F."/>
            <person name="Gohlke U."/>
            <person name="De Leeuw E."/>
            <person name="Stanley N.R."/>
            <person name="Palmer T."/>
            <person name="Saibil H.R."/>
            <person name="Berks B.C."/>
        </authorList>
    </citation>
    <scope>COMPLEX BETWEEN TATA AND TATB</scope>
</reference>
<reference key="9">
    <citation type="journal article" date="2001" name="FEBS Lett.">
        <title>Membrane interactions and self-association of the TatA and TatB components of the twin-arginine translocation pathway.</title>
        <authorList>
            <person name="De Leeuw E."/>
            <person name="Porcelli I."/>
            <person name="Sargent F."/>
            <person name="Palmer T."/>
            <person name="Berks B.C."/>
        </authorList>
    </citation>
    <scope>SUBCELLULAR LOCATION</scope>
</reference>
<reference key="10">
    <citation type="journal article" date="2001" name="J. Bacteriol.">
        <title>Constitutive expression of Escherichia coli tat genes indicates an important role for the twin-arginine translocase during aerobic and anaerobic growth.</title>
        <authorList>
            <person name="Jack R.L."/>
            <person name="Sargent F."/>
            <person name="Berks B.C."/>
            <person name="Sawers G."/>
            <person name="Palmer T."/>
        </authorList>
    </citation>
    <scope>INDUCTION</scope>
</reference>
<reference key="11">
    <citation type="journal article" date="2002" name="Biochemistry">
        <title>Characterization and membrane assembly of the TatA component of the Escherichia coli twin-arginine protein transport system.</title>
        <authorList>
            <person name="Porcelli I."/>
            <person name="de Leeuw E."/>
            <person name="Wallis R."/>
            <person name="van den Brink-van der Laan E."/>
            <person name="de Kruijff B."/>
            <person name="Wallace B.A."/>
            <person name="Palmer T."/>
            <person name="Berks B.C."/>
        </authorList>
    </citation>
    <scope>TOPOLOGY</scope>
    <scope>TATA HOMOOLIGOMERIC COMPLEXES</scope>
</reference>
<reference key="12">
    <citation type="journal article" date="2002" name="J. Mol. Biol.">
        <title>In vivo dissection of the Tat translocation pathway in Escherichia coli.</title>
        <authorList>
            <person name="Ize B."/>
            <person name="Gerard F."/>
            <person name="Zhang M."/>
            <person name="Chanal A."/>
            <person name="Voulhoux R."/>
            <person name="Palmer T."/>
            <person name="Filloux A."/>
            <person name="Wu L.F."/>
        </authorList>
    </citation>
    <scope>FUNCTION</scope>
    <source>
        <strain>K12 / MC4100 / ATCC 35695 / DSM 6574</strain>
    </source>
</reference>
<reference key="13">
    <citation type="journal article" date="2004" name="FEBS Lett.">
        <title>Localization of the Tat translocon components in Escherichia coli.</title>
        <authorList>
            <person name="Berthelmann F."/>
            <person name="Bruser T."/>
        </authorList>
    </citation>
    <scope>SUBUNIT</scope>
    <scope>SUBCELLULAR LOCATION</scope>
    <source>
        <strain>K12 / MC4100 / ATCC 35695 / DSM 6574</strain>
    </source>
</reference>
<reference key="14">
    <citation type="journal article" date="2005" name="J. Mol. Biol.">
        <title>The Escherichia coli twin-arginine translocation apparatus incorporates a distinct form of TatABC complex, spectrum of modular TatA complexes and minor TatAB complex.</title>
        <authorList>
            <person name="Oates J."/>
            <person name="Barrett C.M."/>
            <person name="Barnett J.P."/>
            <person name="Byrne K.G."/>
            <person name="Bolhuis A."/>
            <person name="Robinson C."/>
        </authorList>
    </citation>
    <scope>SUBUNIT</scope>
    <source>
        <strain>K12 / MC4100 / ATCC 35695 / DSM 6574</strain>
    </source>
</reference>
<reference key="15">
    <citation type="journal article" date="2005" name="J. Mol. Biol.">
        <title>The core TatABC complex of the twin-arginine translocase in Escherichia coli: TatC drives assembly whereas TatA is essential for stability.</title>
        <authorList>
            <person name="Mangels D."/>
            <person name="Mathers J.E."/>
            <person name="Bolhuis A."/>
            <person name="Robinson C."/>
        </authorList>
    </citation>
    <scope>SUBUNIT</scope>
</reference>
<reference key="16">
    <citation type="journal article" date="2005" name="Proc. Natl. Acad. Sci. U.S.A.">
        <title>The TatA component of the twin-arginine protein transport system forms channel complexes of variable diameter.</title>
        <authorList>
            <person name="Gohlke U."/>
            <person name="Pullan L."/>
            <person name="McDevitt C.A."/>
            <person name="Porcelli I."/>
            <person name="de Leeuw E."/>
            <person name="Palmer T."/>
            <person name="Saibil H.R."/>
            <person name="Berks B.C."/>
        </authorList>
    </citation>
    <scope>ARCHITECTURE OF THE TATA COMPLEX BY ELECTRON MICROSCOPY</scope>
</reference>
<reference key="17">
    <citation type="journal article" date="2007" name="FEBS Lett.">
        <title>TatBC, TatB, and TatC form structurally autonomous units within the twin arginine protein transport system of Escherichia coli.</title>
        <authorList>
            <person name="Orriss G.L."/>
            <person name="Tarry M.J."/>
            <person name="Ize B."/>
            <person name="Sargent F."/>
            <person name="Lea S.M."/>
            <person name="Palmer T."/>
            <person name="Berks B.C."/>
        </authorList>
    </citation>
    <scope>SUBUNIT</scope>
    <source>
        <strain>K12 / MC4100 / ATCC 35695 / DSM 6574</strain>
    </source>
</reference>
<reference key="18">
    <citation type="journal article" date="2010" name="PLoS ONE">
        <title>Visualizing interactions along the Escherichia coli twin-arginine translocation pathway using protein fragment complementation.</title>
        <authorList>
            <person name="Kostecki J.S."/>
            <person name="Li H."/>
            <person name="Turner R.J."/>
            <person name="DeLisa M.P."/>
        </authorList>
    </citation>
    <scope>SUBUNIT</scope>
    <scope>SUBCELLULAR LOCATION</scope>
    <scope>MUTAGENESIS OF PHE-39</scope>
</reference>
<comment type="function">
    <text evidence="1 5 11">Part of the twin-arginine translocation (Tat) system that transports large folded proteins containing a characteristic twin-arginine motif in their signal peptide across membranes. TatA could form the protein-conducting channel of the Tat system.</text>
</comment>
<comment type="subunit">
    <text evidence="1 6 7 8 9 10">The Tat system comprises two distinct complexes: a TatABC complex, containing multiple copies of TatA, TatB and TatC subunits, and a separate TatA complex, containing only TatA subunits. Substrates initially bind to the TatABC complex, which probably triggers association of the separate TatA complex to form the active translocon. A complex containing only TatA and TatB has also been identified. It could be either an assembly intermediate or a disassembly intermediate generated during translocation activity. Each of TatA, TatB and TatC are able to interact in pairs without the third partner; TatA also forms homooligomers.</text>
</comment>
<comment type="interaction">
    <interactant intactId="EBI-4411542">
        <id>P69428</id>
    </interactant>
    <interactant intactId="EBI-4411641">
        <id>P69423</id>
        <label>tatC</label>
    </interactant>
    <organismsDiffer>false</organismsDiffer>
    <experiments>2</experiments>
</comment>
<comment type="subcellular location">
    <subcellularLocation>
        <location evidence="1 4 6 10">Cell inner membrane</location>
        <topology evidence="1 4 6 10">Single-pass membrane protein</topology>
        <orientation evidence="4 6 10">Cytoplasmic side</orientation>
    </subcellularLocation>
    <text>Abundant all over the membrane, but is more concentrated at the cell poles.</text>
</comment>
<comment type="induction">
    <text evidence="3">Constitutively expressed. TatA is the most highly expressed of the tat genes.</text>
</comment>
<comment type="disruption phenotype">
    <text evidence="11">Disruption of tatA affects the correct localization of multiple enzymes whose precursors bear twin arginine transfer peptides. Export is completely blocked when both tatA and tatE are inactivated.</text>
</comment>
<comment type="miscellaneous">
    <text>TatA forms a transmembrane channel with a lid structure on the cytoplasmic side. The number of TatA protomers can vary so that the channel can adopt different diameters to accommodate substrates of various sizes. This enables TatA to pack tightly around substrate and prevents ion leakage during transport.</text>
</comment>
<comment type="miscellaneous">
    <text>Absence of TatA from the TatBC complex leads to the instability of the complex and the specific breakdown of TatB.</text>
</comment>
<comment type="similarity">
    <text evidence="1">Belongs to the TatA/E family.</text>
</comment>
<comment type="sequence caution" evidence="12">
    <conflict type="frameshift">
        <sequence resource="EMBL-CDS" id="AAA67633"/>
    </conflict>
</comment>
<comment type="sequence caution" evidence="12">
    <conflict type="erroneous initiation">
        <sequence resource="EMBL-CDS" id="AAC19240"/>
    </conflict>
    <text>Extended N-terminus.</text>
</comment>
<keyword id="KW-0002">3D-structure</keyword>
<keyword id="KW-0997">Cell inner membrane</keyword>
<keyword id="KW-1003">Cell membrane</keyword>
<keyword id="KW-0903">Direct protein sequencing</keyword>
<keyword id="KW-0472">Membrane</keyword>
<keyword id="KW-0653">Protein transport</keyword>
<keyword id="KW-1185">Reference proteome</keyword>
<keyword id="KW-0811">Translocation</keyword>
<keyword id="KW-0812">Transmembrane</keyword>
<keyword id="KW-1133">Transmembrane helix</keyword>
<keyword id="KW-0813">Transport</keyword>
<gene>
    <name evidence="1" type="primary">tatA</name>
    <name type="synonym">mttA1</name>
    <name type="synonym">yigT</name>
    <name type="ordered locus">b3836</name>
    <name type="ordered locus">JW3813</name>
</gene>
<evidence type="ECO:0000255" key="1">
    <source>
        <dbReference type="HAMAP-Rule" id="MF_00236"/>
    </source>
</evidence>
<evidence type="ECO:0000256" key="2">
    <source>
        <dbReference type="SAM" id="MobiDB-lite"/>
    </source>
</evidence>
<evidence type="ECO:0000269" key="3">
    <source>
    </source>
</evidence>
<evidence type="ECO:0000269" key="4">
    <source>
    </source>
</evidence>
<evidence type="ECO:0000269" key="5">
    <source>
    </source>
</evidence>
<evidence type="ECO:0000269" key="6">
    <source>
    </source>
</evidence>
<evidence type="ECO:0000269" key="7">
    <source>
    </source>
</evidence>
<evidence type="ECO:0000269" key="8">
    <source>
    </source>
</evidence>
<evidence type="ECO:0000269" key="9">
    <source>
    </source>
</evidence>
<evidence type="ECO:0000269" key="10">
    <source>
    </source>
</evidence>
<evidence type="ECO:0000269" key="11">
    <source>
    </source>
</evidence>
<evidence type="ECO:0000305" key="12"/>
<evidence type="ECO:0007829" key="13">
    <source>
        <dbReference type="PDB" id="2LZR"/>
    </source>
</evidence>
<evidence type="ECO:0007829" key="14">
    <source>
        <dbReference type="PDB" id="2LZS"/>
    </source>
</evidence>
<accession>P69428</accession>
<accession>O65938</accession>
<accession>P27856</accession>
<accession>Q2M8E1</accession>
<feature type="chain" id="PRO_0000097934" description="Sec-independent protein translocase protein TatA">
    <location>
        <begin position="1"/>
        <end position="89"/>
    </location>
</feature>
<feature type="transmembrane region" description="Helical" evidence="1">
    <location>
        <begin position="1"/>
        <end position="21"/>
    </location>
</feature>
<feature type="region of interest" description="Disordered" evidence="2">
    <location>
        <begin position="65"/>
        <end position="89"/>
    </location>
</feature>
<feature type="compositionally biased region" description="Basic and acidic residues" evidence="2">
    <location>
        <begin position="76"/>
        <end position="89"/>
    </location>
</feature>
<feature type="mutagenesis site" description="Homooligomerizes more efficiently than wt, blocks translocation." evidence="10">
    <original>F</original>
    <variation>A</variation>
    <location>
        <position position="39"/>
    </location>
</feature>
<feature type="strand" evidence="14">
    <location>
        <begin position="3"/>
        <end position="5"/>
    </location>
</feature>
<feature type="helix" evidence="13">
    <location>
        <begin position="6"/>
        <end position="32"/>
    </location>
</feature>
<feature type="helix" evidence="13">
    <location>
        <begin position="34"/>
        <end position="42"/>
    </location>
</feature>
<feature type="helix" evidence="14">
    <location>
        <begin position="43"/>
        <end position="46"/>
    </location>
</feature>
<name>TATA_ECOLI</name>
<sequence length="89" mass="9664">MGGISIWQLLIIAVIVVLLFGTKKLGSIGSDLGASIKGFKKAMSDDEPKQDKTSQDADFTAKTIADKQADTNQEQAKTEDAKRHDKEQV</sequence>